<accession>P46742</accession>
<gene>
    <name type="primary">RPS10</name>
</gene>
<proteinExistence type="inferred from homology"/>
<sequence length="107" mass="12596">MQQVQLKLKSFDPVYINQLISLLNDVLDTLEIQNSKEIFLPSKIKKITVIRSPHIHKKSRDQFQIKRYKRSMIISFTNIDILHAFLEICKDLHVVGVQIHISVKYHS</sequence>
<organism>
    <name type="scientific">Prototheca wickerhamii</name>
    <dbReference type="NCBI Taxonomy" id="3111"/>
    <lineage>
        <taxon>Eukaryota</taxon>
        <taxon>Viridiplantae</taxon>
        <taxon>Chlorophyta</taxon>
        <taxon>core chlorophytes</taxon>
        <taxon>Trebouxiophyceae</taxon>
        <taxon>Chlorellales</taxon>
        <taxon>Chlorellaceae</taxon>
        <taxon>Prototheca</taxon>
    </lineage>
</organism>
<reference key="1">
    <citation type="journal article" date="1994" name="J. Mol. Biol.">
        <title>Complete sequence of the mitochondrial DNA of the chlorophyte alga Prototheca wickerhamii. Gene content and genome organization.</title>
        <authorList>
            <person name="Wolff G."/>
            <person name="Plante I."/>
            <person name="Lang B.F."/>
            <person name="Kueck U."/>
            <person name="Burger G."/>
        </authorList>
    </citation>
    <scope>NUCLEOTIDE SEQUENCE [GENOMIC DNA]</scope>
    <source>
        <strain>263-11</strain>
    </source>
</reference>
<name>RT10_PROWI</name>
<protein>
    <recommendedName>
        <fullName evidence="1">Small ribosomal subunit protein uS10m</fullName>
    </recommendedName>
    <alternativeName>
        <fullName>Ribosomal protein S10, mitochondrial</fullName>
    </alternativeName>
</protein>
<keyword id="KW-0496">Mitochondrion</keyword>
<keyword id="KW-0687">Ribonucleoprotein</keyword>
<keyword id="KW-0689">Ribosomal protein</keyword>
<evidence type="ECO:0000305" key="1"/>
<comment type="subcellular location">
    <subcellularLocation>
        <location>Mitochondrion</location>
    </subcellularLocation>
</comment>
<comment type="similarity">
    <text evidence="1">Belongs to the universal ribosomal protein uS10 family.</text>
</comment>
<dbReference type="EMBL" id="U02970">
    <property type="protein sequence ID" value="AAD12663.1"/>
    <property type="molecule type" value="Genomic_DNA"/>
</dbReference>
<dbReference type="PIR" id="T11944">
    <property type="entry name" value="T11944"/>
</dbReference>
<dbReference type="RefSeq" id="NP_042275.1">
    <property type="nucleotide sequence ID" value="NC_001613.1"/>
</dbReference>
<dbReference type="SMR" id="P46742"/>
<dbReference type="GeneID" id="802134"/>
<dbReference type="GO" id="GO:0005739">
    <property type="term" value="C:mitochondrion"/>
    <property type="evidence" value="ECO:0007669"/>
    <property type="project" value="UniProtKB-SubCell"/>
</dbReference>
<dbReference type="GO" id="GO:1990904">
    <property type="term" value="C:ribonucleoprotein complex"/>
    <property type="evidence" value="ECO:0007669"/>
    <property type="project" value="UniProtKB-KW"/>
</dbReference>
<dbReference type="GO" id="GO:0005840">
    <property type="term" value="C:ribosome"/>
    <property type="evidence" value="ECO:0007669"/>
    <property type="project" value="UniProtKB-KW"/>
</dbReference>
<dbReference type="GO" id="GO:0003735">
    <property type="term" value="F:structural constituent of ribosome"/>
    <property type="evidence" value="ECO:0007669"/>
    <property type="project" value="InterPro"/>
</dbReference>
<dbReference type="GO" id="GO:0006412">
    <property type="term" value="P:translation"/>
    <property type="evidence" value="ECO:0007669"/>
    <property type="project" value="InterPro"/>
</dbReference>
<dbReference type="Gene3D" id="3.30.70.600">
    <property type="entry name" value="Ribosomal protein S10 domain"/>
    <property type="match status" value="1"/>
</dbReference>
<dbReference type="HAMAP" id="MF_00508">
    <property type="entry name" value="Ribosomal_uS10"/>
    <property type="match status" value="1"/>
</dbReference>
<dbReference type="InterPro" id="IPR001848">
    <property type="entry name" value="Ribosomal_uS10"/>
</dbReference>
<dbReference type="InterPro" id="IPR027486">
    <property type="entry name" value="Ribosomal_uS10_dom"/>
</dbReference>
<dbReference type="InterPro" id="IPR036838">
    <property type="entry name" value="Ribosomal_uS10_dom_sf"/>
</dbReference>
<dbReference type="NCBIfam" id="TIGR01049">
    <property type="entry name" value="rpsJ_bact"/>
    <property type="match status" value="1"/>
</dbReference>
<dbReference type="PANTHER" id="PTHR11700">
    <property type="entry name" value="30S RIBOSOMAL PROTEIN S10 FAMILY MEMBER"/>
    <property type="match status" value="1"/>
</dbReference>
<dbReference type="Pfam" id="PF00338">
    <property type="entry name" value="Ribosomal_S10"/>
    <property type="match status" value="1"/>
</dbReference>
<dbReference type="PRINTS" id="PR00971">
    <property type="entry name" value="RIBOSOMALS10"/>
</dbReference>
<dbReference type="SMART" id="SM01403">
    <property type="entry name" value="Ribosomal_S10"/>
    <property type="match status" value="1"/>
</dbReference>
<dbReference type="SUPFAM" id="SSF54999">
    <property type="entry name" value="Ribosomal protein S10"/>
    <property type="match status" value="1"/>
</dbReference>
<geneLocation type="mitochondrion"/>
<feature type="chain" id="PRO_0000146672" description="Small ribosomal subunit protein uS10m">
    <location>
        <begin position="1"/>
        <end position="107"/>
    </location>
</feature>